<dbReference type="EMBL" id="CU329670">
    <property type="protein sequence ID" value="CAB11064.1"/>
    <property type="molecule type" value="Genomic_DNA"/>
</dbReference>
<dbReference type="PIR" id="T39009">
    <property type="entry name" value="T39009"/>
</dbReference>
<dbReference type="RefSeq" id="NP_593757.1">
    <property type="nucleotide sequence ID" value="NM_001019187.2"/>
</dbReference>
<dbReference type="BioGRID" id="279665">
    <property type="interactions" value="41"/>
</dbReference>
<dbReference type="FunCoup" id="O14207">
    <property type="interactions" value="4"/>
</dbReference>
<dbReference type="STRING" id="284812.O14207"/>
<dbReference type="iPTMnet" id="O14207"/>
<dbReference type="PaxDb" id="4896-SPAC6B12.02c.1"/>
<dbReference type="EnsemblFungi" id="SPAC6B12.02c.1">
    <property type="protein sequence ID" value="SPAC6B12.02c.1:pep"/>
    <property type="gene ID" value="SPAC6B12.02c"/>
</dbReference>
<dbReference type="GeneID" id="2543237"/>
<dbReference type="KEGG" id="spo:2543237"/>
<dbReference type="PomBase" id="SPAC6B12.02c">
    <property type="gene designation" value="mus7"/>
</dbReference>
<dbReference type="VEuPathDB" id="FungiDB:SPAC6B12.02c"/>
<dbReference type="eggNOG" id="ENOG502QSDS">
    <property type="taxonomic scope" value="Eukaryota"/>
</dbReference>
<dbReference type="HOGENOM" id="CLU_236057_0_0_1"/>
<dbReference type="InParanoid" id="O14207"/>
<dbReference type="OMA" id="GDILQYC"/>
<dbReference type="PRO" id="PR:O14207"/>
<dbReference type="Proteomes" id="UP000002485">
    <property type="component" value="Chromosome I"/>
</dbReference>
<dbReference type="GO" id="GO:0035361">
    <property type="term" value="C:Cul8-RING ubiquitin ligase complex"/>
    <property type="evidence" value="ECO:0000318"/>
    <property type="project" value="GO_Central"/>
</dbReference>
<dbReference type="GO" id="GO:0005634">
    <property type="term" value="C:nucleus"/>
    <property type="evidence" value="ECO:0000314"/>
    <property type="project" value="PomBase"/>
</dbReference>
<dbReference type="GO" id="GO:0006974">
    <property type="term" value="P:DNA damage response"/>
    <property type="evidence" value="ECO:0000316"/>
    <property type="project" value="PomBase"/>
</dbReference>
<dbReference type="GO" id="GO:0000724">
    <property type="term" value="P:double-strand break repair via homologous recombination"/>
    <property type="evidence" value="ECO:0000315"/>
    <property type="project" value="PomBase"/>
</dbReference>
<dbReference type="GO" id="GO:0031297">
    <property type="term" value="P:replication fork processing"/>
    <property type="evidence" value="ECO:0000315"/>
    <property type="project" value="PomBase"/>
</dbReference>
<dbReference type="InterPro" id="IPR019021">
    <property type="entry name" value="Mms22"/>
</dbReference>
<dbReference type="PANTHER" id="PTHR28122">
    <property type="entry name" value="E3 UBIQUITIN-PROTEIN LIGASE SUBSTRATE RECEPTOR MMS22"/>
    <property type="match status" value="1"/>
</dbReference>
<dbReference type="PANTHER" id="PTHR28122:SF1">
    <property type="entry name" value="E3 UBIQUITIN-PROTEIN LIGASE SUBSTRATE RECEPTOR MMS22"/>
    <property type="match status" value="1"/>
</dbReference>
<dbReference type="Pfam" id="PF09462">
    <property type="entry name" value="Mus7"/>
    <property type="match status" value="1"/>
</dbReference>
<gene>
    <name type="primary">mus7</name>
    <name type="synonym">mms22</name>
    <name type="ORF">SPAC6B12.02c</name>
</gene>
<feature type="chain" id="PRO_0000116662" description="Protein mms22">
    <location>
        <begin position="1"/>
        <end position="1888"/>
    </location>
</feature>
<feature type="region of interest" description="Disordered" evidence="1">
    <location>
        <begin position="12"/>
        <end position="34"/>
    </location>
</feature>
<feature type="region of interest" description="Disordered" evidence="1">
    <location>
        <begin position="151"/>
        <end position="258"/>
    </location>
</feature>
<feature type="region of interest" description="Disordered" evidence="1">
    <location>
        <begin position="316"/>
        <end position="354"/>
    </location>
</feature>
<feature type="compositionally biased region" description="Polar residues" evidence="1">
    <location>
        <begin position="13"/>
        <end position="32"/>
    </location>
</feature>
<feature type="compositionally biased region" description="Polar residues" evidence="1">
    <location>
        <begin position="212"/>
        <end position="227"/>
    </location>
</feature>
<feature type="compositionally biased region" description="Polar residues" evidence="1">
    <location>
        <begin position="338"/>
        <end position="348"/>
    </location>
</feature>
<proteinExistence type="inferred from homology"/>
<protein>
    <recommendedName>
        <fullName>Protein mms22</fullName>
    </recommendedName>
    <alternativeName>
        <fullName>Protein mus7</fullName>
    </alternativeName>
</protein>
<reference key="1">
    <citation type="journal article" date="2002" name="Nature">
        <title>The genome sequence of Schizosaccharomyces pombe.</title>
        <authorList>
            <person name="Wood V."/>
            <person name="Gwilliam R."/>
            <person name="Rajandream M.A."/>
            <person name="Lyne M.H."/>
            <person name="Lyne R."/>
            <person name="Stewart A."/>
            <person name="Sgouros J.G."/>
            <person name="Peat N."/>
            <person name="Hayles J."/>
            <person name="Baker S.G."/>
            <person name="Basham D."/>
            <person name="Bowman S."/>
            <person name="Brooks K."/>
            <person name="Brown D."/>
            <person name="Brown S."/>
            <person name="Chillingworth T."/>
            <person name="Churcher C.M."/>
            <person name="Collins M."/>
            <person name="Connor R."/>
            <person name="Cronin A."/>
            <person name="Davis P."/>
            <person name="Feltwell T."/>
            <person name="Fraser A."/>
            <person name="Gentles S."/>
            <person name="Goble A."/>
            <person name="Hamlin N."/>
            <person name="Harris D.E."/>
            <person name="Hidalgo J."/>
            <person name="Hodgson G."/>
            <person name="Holroyd S."/>
            <person name="Hornsby T."/>
            <person name="Howarth S."/>
            <person name="Huckle E.J."/>
            <person name="Hunt S."/>
            <person name="Jagels K."/>
            <person name="James K.D."/>
            <person name="Jones L."/>
            <person name="Jones M."/>
            <person name="Leather S."/>
            <person name="McDonald S."/>
            <person name="McLean J."/>
            <person name="Mooney P."/>
            <person name="Moule S."/>
            <person name="Mungall K.L."/>
            <person name="Murphy L.D."/>
            <person name="Niblett D."/>
            <person name="Odell C."/>
            <person name="Oliver K."/>
            <person name="O'Neil S."/>
            <person name="Pearson D."/>
            <person name="Quail M.A."/>
            <person name="Rabbinowitsch E."/>
            <person name="Rutherford K.M."/>
            <person name="Rutter S."/>
            <person name="Saunders D."/>
            <person name="Seeger K."/>
            <person name="Sharp S."/>
            <person name="Skelton J."/>
            <person name="Simmonds M.N."/>
            <person name="Squares R."/>
            <person name="Squares S."/>
            <person name="Stevens K."/>
            <person name="Taylor K."/>
            <person name="Taylor R.G."/>
            <person name="Tivey A."/>
            <person name="Walsh S.V."/>
            <person name="Warren T."/>
            <person name="Whitehead S."/>
            <person name="Woodward J.R."/>
            <person name="Volckaert G."/>
            <person name="Aert R."/>
            <person name="Robben J."/>
            <person name="Grymonprez B."/>
            <person name="Weltjens I."/>
            <person name="Vanstreels E."/>
            <person name="Rieger M."/>
            <person name="Schaefer M."/>
            <person name="Mueller-Auer S."/>
            <person name="Gabel C."/>
            <person name="Fuchs M."/>
            <person name="Duesterhoeft A."/>
            <person name="Fritzc C."/>
            <person name="Holzer E."/>
            <person name="Moestl D."/>
            <person name="Hilbert H."/>
            <person name="Borzym K."/>
            <person name="Langer I."/>
            <person name="Beck A."/>
            <person name="Lehrach H."/>
            <person name="Reinhardt R."/>
            <person name="Pohl T.M."/>
            <person name="Eger P."/>
            <person name="Zimmermann W."/>
            <person name="Wedler H."/>
            <person name="Wambutt R."/>
            <person name="Purnelle B."/>
            <person name="Goffeau A."/>
            <person name="Cadieu E."/>
            <person name="Dreano S."/>
            <person name="Gloux S."/>
            <person name="Lelaure V."/>
            <person name="Mottier S."/>
            <person name="Galibert F."/>
            <person name="Aves S.J."/>
            <person name="Xiang Z."/>
            <person name="Hunt C."/>
            <person name="Moore K."/>
            <person name="Hurst S.M."/>
            <person name="Lucas M."/>
            <person name="Rochet M."/>
            <person name="Gaillardin C."/>
            <person name="Tallada V.A."/>
            <person name="Garzon A."/>
            <person name="Thode G."/>
            <person name="Daga R.R."/>
            <person name="Cruzado L."/>
            <person name="Jimenez J."/>
            <person name="Sanchez M."/>
            <person name="del Rey F."/>
            <person name="Benito J."/>
            <person name="Dominguez A."/>
            <person name="Revuelta J.L."/>
            <person name="Moreno S."/>
            <person name="Armstrong J."/>
            <person name="Forsburg S.L."/>
            <person name="Cerutti L."/>
            <person name="Lowe T."/>
            <person name="McCombie W.R."/>
            <person name="Paulsen I."/>
            <person name="Potashkin J."/>
            <person name="Shpakovski G.V."/>
            <person name="Ussery D."/>
            <person name="Barrell B.G."/>
            <person name="Nurse P."/>
        </authorList>
    </citation>
    <scope>NUCLEOTIDE SEQUENCE [LARGE SCALE GENOMIC DNA]</scope>
    <source>
        <strain>972 / ATCC 24843</strain>
    </source>
</reference>
<reference key="2">
    <citation type="journal article" date="2007" name="DNA Repair">
        <title>The novel gene mus7(+) is involved in the repair of replication-associated DNA damage in fission yeast.</title>
        <authorList>
            <person name="Yokoyama M."/>
            <person name="Inoue H."/>
            <person name="Ishii C."/>
            <person name="Murakami Y."/>
        </authorList>
    </citation>
    <scope>FUNCTION</scope>
</reference>
<reference key="3">
    <citation type="journal article" date="2007" name="Genetics">
        <title>Mms22 preserves genomic integrity during DNA replication in Schizosaccharomyces pombe.</title>
        <authorList>
            <person name="Dovey C.L."/>
            <person name="Russell P."/>
        </authorList>
    </citation>
    <scope>FUNCTION</scope>
    <scope>SUBCELLULAR LOCATION</scope>
</reference>
<accession>O14207</accession>
<organism>
    <name type="scientific">Schizosaccharomyces pombe (strain 972 / ATCC 24843)</name>
    <name type="common">Fission yeast</name>
    <dbReference type="NCBI Taxonomy" id="284812"/>
    <lineage>
        <taxon>Eukaryota</taxon>
        <taxon>Fungi</taxon>
        <taxon>Dikarya</taxon>
        <taxon>Ascomycota</taxon>
        <taxon>Taphrinomycotina</taxon>
        <taxon>Schizosaccharomycetes</taxon>
        <taxon>Schizosaccharomycetales</taxon>
        <taxon>Schizosaccharomycetaceae</taxon>
        <taxon>Schizosaccharomyces</taxon>
    </lineage>
</organism>
<evidence type="ECO:0000256" key="1">
    <source>
        <dbReference type="SAM" id="MobiDB-lite"/>
    </source>
</evidence>
<evidence type="ECO:0000269" key="2">
    <source>
    </source>
</evidence>
<evidence type="ECO:0000269" key="3">
    <source>
    </source>
</evidence>
<evidence type="ECO:0000305" key="4"/>
<name>MMS22_SCHPO</name>
<sequence>MNSFLLLDHVSDSQDSGSEWSNTHGSLISQRGNEYDGITPATKEKNQNKLEILNNETTIGSTKSSVSSLPELNRNVSFEKSDQNLAETKREEENKRTEVFKKDAEHEAVVVKRDFRPRRPEQTRPYTYDFLRHQIEFKRIGLVPITVPHGFSSDRSITSKSSHKPVNVIVRNRASSRKPPLTSTHRFRRYGAVISDSDDDESNTEQDHSKESNLNTADNDLALSSTIEGKKTSTSKEALESESLLSDSDQSMTNISSNSTVSDLNLKTLKKRLRGVLPPSFLTLQEKKKLENRGVKKKTSLHKSVIEGEKIKGVARRKLHPRSTAKLSSELGNEISDSDNSISTPTPTDDSRFDTSEFLDSISRDNGWLKEDVVDQLWLPKRSLSALKKSSSLTSENPFQLNVAANAVSTIPVYRTTKTKMKKNRFKYVEVEKLPDLILESYGKKAPKFLRVFARSSSHIPKMIRRKRQMDSKKYFSFDKESDRQVIDQVLSDWYSGKHELVQQSHSYKKPSDSKSVGGNIFSVNSKKHSVNINAKTAANNGLSHLQNFSEELLKKRKLFSSLFSNNVSYKKSKKLKRTHTVHDKCQKVAKLDHYIRDNIELNSKEREHDCYEGTLAVPQVNTEIRKSSRKQKAQRFIRDDFDTVFFQSSSNPNYFTDVNPFWNIGIWSTTFNVITFRPGLSLPNNSFIKTQGLNSILQLDIVTHPFKSVYAFSCLFNIQDDVFKTFEKLKDTFETVLENLPYFTNSETVDLYNLLSFCSAFILHSQVSMGLVNLASSFLETYALVNDRVSSISGLNRSQLVEKIAVLFQTFQVVFYCEFELGNQQNINKVSWLASDLISKLLSAGQSGLLECYRNLRIQASDTTVIDTLFLESWSILNHILFHVYKKKYALWEQVNSFFDLQKKELSILEMEKIWYVIMTLNPVFQIGLNGTTHSPGNNSFWPLIIRVSESAFKMHKDGHNVKVVERYLRTVFLRIHFLISEWRWEDVAQILFLIFDFFSHRKFNDLSSEISEDTPTDFPDFVKSLDRPPNLHVTALDTCFVIYLKVILISISRLRQVDENTNSIKRIVSRLQPLHSRQYTRESPFSIKDFMSLEHTHTLLICLYWAAPENCRPSLNRIRDIVIVDNSHLKARLISLKAWLHLMKYVIKEGTDYELAQGMEWFNSILKVTFDEYLALFSNGTSVGEMQLAEYSKHQLENALIVAFHSLQDLIPNSSVYISRINVLVTEQSCRRILKDSHFFPPRVTLECILFLKKFLQYQSNTEPPKVTVVGSTSHDSQDAYFDSDVLDDNTLILEQEKFERKYEVAQILRTFVSPFLYQTISYLVGNDEDKENYIRILLLPLMECMAICASFAVEAKINDWSYYIDFGSESWERIRNTPLKRSLSTTFYSFLISYNDSFIKKHEEKVLTVWFESLGALDEDHAAQFTILLLQKNLKNPILLNLPISVKIEEISINYFKSVHLNLLTAVFCNMAKLYADAKTNGFASSQYLQSLFIHYLSSLLSSMQHSYETNGHSSDTHSLFVINSQRVVGDILQYCSQFANDRNLPALRYFMDSTKFPQPPERLEYTALRLRSYARKTLTNSASQNALFSFLKANFDVALLEQKQTETSNLLRLAMGFHNQNSSSKWDVEISSLRKFCVKELLLSYLGEGSLAAMFYSLLLLEGLSRTYNSFRRIYLQPYIQQLLCEEISVFVADLEKYALLYENKRPLLSGRIYYLISSFVAISMTNKTSGLPSSLICNLQNFLARIARDFLLELCWNIEGSEFPPPYNTVDCRSKFVKTIQQHCSADWYDNVTNIVHKSRKKKLVLPSQVEQEEEYWSGLMEVTIQIWKHDKGFLEPELDRFLNVICSYAPDMSGLPTKIKCFLDKIGYSWMTEENDFDIVLF</sequence>
<comment type="function">
    <text evidence="2 3">Involved in protection against replication-dependent DNA damage. May act by restoring active replication forks, repairing unusual DNA structures, and/or preventing aberrant DNA rearrangement at arrested replication forks.</text>
</comment>
<comment type="subcellular location">
    <subcellularLocation>
        <location evidence="3">Nucleus</location>
    </subcellularLocation>
</comment>
<comment type="similarity">
    <text evidence="4">Belongs to the MMS22 family.</text>
</comment>
<keyword id="KW-0227">DNA damage</keyword>
<keyword id="KW-0234">DNA repair</keyword>
<keyword id="KW-0539">Nucleus</keyword>
<keyword id="KW-1185">Reference proteome</keyword>